<reference key="1">
    <citation type="journal article" date="2005" name="Nucleic Acids Res.">
        <title>Genomic blueprint of Hahella chejuensis, a marine microbe producing an algicidal agent.</title>
        <authorList>
            <person name="Jeong H."/>
            <person name="Yim J.H."/>
            <person name="Lee C."/>
            <person name="Choi S.-H."/>
            <person name="Park Y.K."/>
            <person name="Yoon S.H."/>
            <person name="Hur C.-G."/>
            <person name="Kang H.-Y."/>
            <person name="Kim D."/>
            <person name="Lee H.H."/>
            <person name="Park K.H."/>
            <person name="Park S.-H."/>
            <person name="Park H.-S."/>
            <person name="Lee H.K."/>
            <person name="Oh T.K."/>
            <person name="Kim J.F."/>
        </authorList>
    </citation>
    <scope>NUCLEOTIDE SEQUENCE [LARGE SCALE GENOMIC DNA]</scope>
    <source>
        <strain>KCTC 2396</strain>
    </source>
</reference>
<proteinExistence type="inferred from homology"/>
<organism>
    <name type="scientific">Hahella chejuensis (strain KCTC 2396)</name>
    <dbReference type="NCBI Taxonomy" id="349521"/>
    <lineage>
        <taxon>Bacteria</taxon>
        <taxon>Pseudomonadati</taxon>
        <taxon>Pseudomonadota</taxon>
        <taxon>Gammaproteobacteria</taxon>
        <taxon>Oceanospirillales</taxon>
        <taxon>Hahellaceae</taxon>
        <taxon>Hahella</taxon>
    </lineage>
</organism>
<feature type="chain" id="PRO_1000097399" description="Thymidylate kinase">
    <location>
        <begin position="1"/>
        <end position="208"/>
    </location>
</feature>
<feature type="binding site" evidence="1">
    <location>
        <begin position="11"/>
        <end position="18"/>
    </location>
    <ligand>
        <name>ATP</name>
        <dbReference type="ChEBI" id="CHEBI:30616"/>
    </ligand>
</feature>
<gene>
    <name evidence="1" type="primary">tmk</name>
    <name type="ordered locus">HCH_02148</name>
</gene>
<evidence type="ECO:0000255" key="1">
    <source>
        <dbReference type="HAMAP-Rule" id="MF_00165"/>
    </source>
</evidence>
<protein>
    <recommendedName>
        <fullName evidence="1">Thymidylate kinase</fullName>
        <ecNumber evidence="1">2.7.4.9</ecNumber>
    </recommendedName>
    <alternativeName>
        <fullName evidence="1">dTMP kinase</fullName>
    </alternativeName>
</protein>
<accession>Q2SK46</accession>
<comment type="function">
    <text evidence="1">Phosphorylation of dTMP to form dTDP in both de novo and salvage pathways of dTTP synthesis.</text>
</comment>
<comment type="catalytic activity">
    <reaction evidence="1">
        <text>dTMP + ATP = dTDP + ADP</text>
        <dbReference type="Rhea" id="RHEA:13517"/>
        <dbReference type="ChEBI" id="CHEBI:30616"/>
        <dbReference type="ChEBI" id="CHEBI:58369"/>
        <dbReference type="ChEBI" id="CHEBI:63528"/>
        <dbReference type="ChEBI" id="CHEBI:456216"/>
        <dbReference type="EC" id="2.7.4.9"/>
    </reaction>
</comment>
<comment type="similarity">
    <text evidence="1">Belongs to the thymidylate kinase family.</text>
</comment>
<name>KTHY_HAHCH</name>
<keyword id="KW-0067">ATP-binding</keyword>
<keyword id="KW-0418">Kinase</keyword>
<keyword id="KW-0545">Nucleotide biosynthesis</keyword>
<keyword id="KW-0547">Nucleotide-binding</keyword>
<keyword id="KW-1185">Reference proteome</keyword>
<keyword id="KW-0808">Transferase</keyword>
<dbReference type="EC" id="2.7.4.9" evidence="1"/>
<dbReference type="EMBL" id="CP000155">
    <property type="protein sequence ID" value="ABC28978.1"/>
    <property type="molecule type" value="Genomic_DNA"/>
</dbReference>
<dbReference type="RefSeq" id="WP_011396048.1">
    <property type="nucleotide sequence ID" value="NC_007645.1"/>
</dbReference>
<dbReference type="SMR" id="Q2SK46"/>
<dbReference type="STRING" id="349521.HCH_02148"/>
<dbReference type="KEGG" id="hch:HCH_02148"/>
<dbReference type="eggNOG" id="COG0125">
    <property type="taxonomic scope" value="Bacteria"/>
</dbReference>
<dbReference type="HOGENOM" id="CLU_049131_0_2_6"/>
<dbReference type="OrthoDB" id="9774907at2"/>
<dbReference type="Proteomes" id="UP000000238">
    <property type="component" value="Chromosome"/>
</dbReference>
<dbReference type="GO" id="GO:0005829">
    <property type="term" value="C:cytosol"/>
    <property type="evidence" value="ECO:0007669"/>
    <property type="project" value="TreeGrafter"/>
</dbReference>
<dbReference type="GO" id="GO:0005524">
    <property type="term" value="F:ATP binding"/>
    <property type="evidence" value="ECO:0007669"/>
    <property type="project" value="UniProtKB-UniRule"/>
</dbReference>
<dbReference type="GO" id="GO:0004798">
    <property type="term" value="F:dTMP kinase activity"/>
    <property type="evidence" value="ECO:0007669"/>
    <property type="project" value="UniProtKB-UniRule"/>
</dbReference>
<dbReference type="GO" id="GO:0006233">
    <property type="term" value="P:dTDP biosynthetic process"/>
    <property type="evidence" value="ECO:0007669"/>
    <property type="project" value="InterPro"/>
</dbReference>
<dbReference type="GO" id="GO:0006235">
    <property type="term" value="P:dTTP biosynthetic process"/>
    <property type="evidence" value="ECO:0007669"/>
    <property type="project" value="UniProtKB-UniRule"/>
</dbReference>
<dbReference type="GO" id="GO:0006227">
    <property type="term" value="P:dUDP biosynthetic process"/>
    <property type="evidence" value="ECO:0007669"/>
    <property type="project" value="TreeGrafter"/>
</dbReference>
<dbReference type="CDD" id="cd01672">
    <property type="entry name" value="TMPK"/>
    <property type="match status" value="1"/>
</dbReference>
<dbReference type="FunFam" id="3.40.50.300:FF:000225">
    <property type="entry name" value="Thymidylate kinase"/>
    <property type="match status" value="1"/>
</dbReference>
<dbReference type="Gene3D" id="3.40.50.300">
    <property type="entry name" value="P-loop containing nucleotide triphosphate hydrolases"/>
    <property type="match status" value="1"/>
</dbReference>
<dbReference type="HAMAP" id="MF_00165">
    <property type="entry name" value="Thymidylate_kinase"/>
    <property type="match status" value="1"/>
</dbReference>
<dbReference type="InterPro" id="IPR027417">
    <property type="entry name" value="P-loop_NTPase"/>
</dbReference>
<dbReference type="InterPro" id="IPR039430">
    <property type="entry name" value="Thymidylate_kin-like_dom"/>
</dbReference>
<dbReference type="InterPro" id="IPR018094">
    <property type="entry name" value="Thymidylate_kinase"/>
</dbReference>
<dbReference type="NCBIfam" id="TIGR00041">
    <property type="entry name" value="DTMP_kinase"/>
    <property type="match status" value="1"/>
</dbReference>
<dbReference type="PANTHER" id="PTHR10344">
    <property type="entry name" value="THYMIDYLATE KINASE"/>
    <property type="match status" value="1"/>
</dbReference>
<dbReference type="PANTHER" id="PTHR10344:SF4">
    <property type="entry name" value="UMP-CMP KINASE 2, MITOCHONDRIAL"/>
    <property type="match status" value="1"/>
</dbReference>
<dbReference type="Pfam" id="PF02223">
    <property type="entry name" value="Thymidylate_kin"/>
    <property type="match status" value="1"/>
</dbReference>
<dbReference type="SUPFAM" id="SSF52540">
    <property type="entry name" value="P-loop containing nucleoside triphosphate hydrolases"/>
    <property type="match status" value="1"/>
</dbReference>
<sequence length="208" mass="23216">MKKGLFITVEGIEGAGKTTNLNFIRSILEESGEEVVMTREPGGTPMAEEVRELLLRPREEAVSSTAELLLMFAARAQHLEQKIKPTIERGVHVLSDRFTDATYAYQGGGRGLSWAMIQDLEKLVQAGFKPDLTLLLRIDPETGMARARKRGALDRFEREKLEFYFCVQEGYMKRVAEDPERFLVVDAQQSLEEVQAAIAQGLAAKLAG</sequence>